<protein>
    <recommendedName>
        <fullName evidence="1">Small ribosomal subunit protein bS6</fullName>
    </recommendedName>
    <alternativeName>
        <fullName evidence="2">30S ribosomal protein S6</fullName>
    </alternativeName>
</protein>
<keyword id="KW-0687">Ribonucleoprotein</keyword>
<keyword id="KW-0689">Ribosomal protein</keyword>
<keyword id="KW-0694">RNA-binding</keyword>
<keyword id="KW-0699">rRNA-binding</keyword>
<name>RS6_LISMC</name>
<gene>
    <name evidence="1" type="primary">rpsF</name>
    <name type="ordered locus">Lm4b_00053</name>
</gene>
<comment type="function">
    <text evidence="1">Binds together with bS18 to 16S ribosomal RNA.</text>
</comment>
<comment type="similarity">
    <text evidence="1">Belongs to the bacterial ribosomal protein bS6 family.</text>
</comment>
<organism>
    <name type="scientific">Listeria monocytogenes serotype 4b (strain CLIP80459)</name>
    <dbReference type="NCBI Taxonomy" id="568819"/>
    <lineage>
        <taxon>Bacteria</taxon>
        <taxon>Bacillati</taxon>
        <taxon>Bacillota</taxon>
        <taxon>Bacilli</taxon>
        <taxon>Bacillales</taxon>
        <taxon>Listeriaceae</taxon>
        <taxon>Listeria</taxon>
    </lineage>
</organism>
<feature type="chain" id="PRO_1000205401" description="Small ribosomal subunit protein bS6">
    <location>
        <begin position="1"/>
        <end position="97"/>
    </location>
</feature>
<sequence length="97" mass="11507">MARKYEIMYIIRPNIEEDEKKAVVERFDGILTENGAEIIESKEWGKRRLAYEINDYRDGFYHIVKLNADKADSINEFDRLAKISDDIIRHMVIKEEA</sequence>
<evidence type="ECO:0000255" key="1">
    <source>
        <dbReference type="HAMAP-Rule" id="MF_00360"/>
    </source>
</evidence>
<evidence type="ECO:0000305" key="2"/>
<proteinExistence type="inferred from homology"/>
<dbReference type="EMBL" id="FM242711">
    <property type="protein sequence ID" value="CAS03843.1"/>
    <property type="molecule type" value="Genomic_DNA"/>
</dbReference>
<dbReference type="RefSeq" id="WP_003721667.1">
    <property type="nucleotide sequence ID" value="NC_012488.1"/>
</dbReference>
<dbReference type="SMR" id="C1KV85"/>
<dbReference type="GeneID" id="93237942"/>
<dbReference type="KEGG" id="lmc:Lm4b_00053"/>
<dbReference type="HOGENOM" id="CLU_113441_5_3_9"/>
<dbReference type="GO" id="GO:0005737">
    <property type="term" value="C:cytoplasm"/>
    <property type="evidence" value="ECO:0007669"/>
    <property type="project" value="UniProtKB-ARBA"/>
</dbReference>
<dbReference type="GO" id="GO:1990904">
    <property type="term" value="C:ribonucleoprotein complex"/>
    <property type="evidence" value="ECO:0007669"/>
    <property type="project" value="UniProtKB-KW"/>
</dbReference>
<dbReference type="GO" id="GO:0005840">
    <property type="term" value="C:ribosome"/>
    <property type="evidence" value="ECO:0007669"/>
    <property type="project" value="UniProtKB-KW"/>
</dbReference>
<dbReference type="GO" id="GO:0070181">
    <property type="term" value="F:small ribosomal subunit rRNA binding"/>
    <property type="evidence" value="ECO:0007669"/>
    <property type="project" value="TreeGrafter"/>
</dbReference>
<dbReference type="GO" id="GO:0003735">
    <property type="term" value="F:structural constituent of ribosome"/>
    <property type="evidence" value="ECO:0007669"/>
    <property type="project" value="InterPro"/>
</dbReference>
<dbReference type="GO" id="GO:0006412">
    <property type="term" value="P:translation"/>
    <property type="evidence" value="ECO:0007669"/>
    <property type="project" value="UniProtKB-UniRule"/>
</dbReference>
<dbReference type="CDD" id="cd00473">
    <property type="entry name" value="bS6"/>
    <property type="match status" value="1"/>
</dbReference>
<dbReference type="FunFam" id="3.30.70.60:FF:000002">
    <property type="entry name" value="30S ribosomal protein S6"/>
    <property type="match status" value="1"/>
</dbReference>
<dbReference type="Gene3D" id="3.30.70.60">
    <property type="match status" value="1"/>
</dbReference>
<dbReference type="HAMAP" id="MF_00360">
    <property type="entry name" value="Ribosomal_bS6"/>
    <property type="match status" value="1"/>
</dbReference>
<dbReference type="InterPro" id="IPR000529">
    <property type="entry name" value="Ribosomal_bS6"/>
</dbReference>
<dbReference type="InterPro" id="IPR020815">
    <property type="entry name" value="Ribosomal_bS6_CS"/>
</dbReference>
<dbReference type="InterPro" id="IPR035980">
    <property type="entry name" value="Ribosomal_bS6_sf"/>
</dbReference>
<dbReference type="InterPro" id="IPR020814">
    <property type="entry name" value="Ribosomal_S6_plastid/chlpt"/>
</dbReference>
<dbReference type="InterPro" id="IPR014717">
    <property type="entry name" value="Transl_elong_EF1B/ribsomal_bS6"/>
</dbReference>
<dbReference type="NCBIfam" id="TIGR00166">
    <property type="entry name" value="S6"/>
    <property type="match status" value="1"/>
</dbReference>
<dbReference type="PANTHER" id="PTHR21011">
    <property type="entry name" value="MITOCHONDRIAL 28S RIBOSOMAL PROTEIN S6"/>
    <property type="match status" value="1"/>
</dbReference>
<dbReference type="PANTHER" id="PTHR21011:SF1">
    <property type="entry name" value="SMALL RIBOSOMAL SUBUNIT PROTEIN BS6M"/>
    <property type="match status" value="1"/>
</dbReference>
<dbReference type="Pfam" id="PF01250">
    <property type="entry name" value="Ribosomal_S6"/>
    <property type="match status" value="1"/>
</dbReference>
<dbReference type="SUPFAM" id="SSF54995">
    <property type="entry name" value="Ribosomal protein S6"/>
    <property type="match status" value="1"/>
</dbReference>
<dbReference type="PROSITE" id="PS01048">
    <property type="entry name" value="RIBOSOMAL_S6"/>
    <property type="match status" value="1"/>
</dbReference>
<reference key="1">
    <citation type="journal article" date="2012" name="BMC Genomics">
        <title>Comparative genomics and transcriptomics of lineages I, II, and III strains of Listeria monocytogenes.</title>
        <authorList>
            <person name="Hain T."/>
            <person name="Ghai R."/>
            <person name="Billion A."/>
            <person name="Kuenne C.T."/>
            <person name="Steinweg C."/>
            <person name="Izar B."/>
            <person name="Mohamed W."/>
            <person name="Mraheil M."/>
            <person name="Domann E."/>
            <person name="Schaffrath S."/>
            <person name="Karst U."/>
            <person name="Goesmann A."/>
            <person name="Oehm S."/>
            <person name="Puhler A."/>
            <person name="Merkl R."/>
            <person name="Vorwerk S."/>
            <person name="Glaser P."/>
            <person name="Garrido P."/>
            <person name="Rusniok C."/>
            <person name="Buchrieser C."/>
            <person name="Goebel W."/>
            <person name="Chakraborty T."/>
        </authorList>
    </citation>
    <scope>NUCLEOTIDE SEQUENCE [LARGE SCALE GENOMIC DNA]</scope>
    <source>
        <strain>CLIP80459</strain>
    </source>
</reference>
<accession>C1KV85</accession>